<protein>
    <recommendedName>
        <fullName evidence="1">Isopentenyl-diphosphate delta-isomerase</fullName>
        <shortName evidence="1">IPP isomerase</shortName>
        <ecNumber evidence="1">5.3.3.2</ecNumber>
    </recommendedName>
    <alternativeName>
        <fullName evidence="1">Isopentenyl diphosphate:dimethylallyl diphosphate isomerase</fullName>
    </alternativeName>
    <alternativeName>
        <fullName evidence="1">Isopentenyl pyrophosphate isomerase</fullName>
    </alternativeName>
    <alternativeName>
        <fullName evidence="1">Type 2 isopentenyl diphosphate isomerase</fullName>
        <shortName evidence="1">IDI-2</shortName>
    </alternativeName>
</protein>
<keyword id="KW-0963">Cytoplasm</keyword>
<keyword id="KW-0285">Flavoprotein</keyword>
<keyword id="KW-0288">FMN</keyword>
<keyword id="KW-0413">Isomerase</keyword>
<keyword id="KW-0414">Isoprene biosynthesis</keyword>
<keyword id="KW-0460">Magnesium</keyword>
<keyword id="KW-0479">Metal-binding</keyword>
<keyword id="KW-0521">NADP</keyword>
<keyword id="KW-1185">Reference proteome</keyword>
<evidence type="ECO:0000255" key="1">
    <source>
        <dbReference type="HAMAP-Rule" id="MF_00354"/>
    </source>
</evidence>
<comment type="function">
    <text evidence="1">Involved in the biosynthesis of isoprenoids. Catalyzes the 1,3-allylic rearrangement of the homoallylic substrate isopentenyl (IPP) to its allylic isomer, dimethylallyl diphosphate (DMAPP).</text>
</comment>
<comment type="catalytic activity">
    <reaction evidence="1">
        <text>isopentenyl diphosphate = dimethylallyl diphosphate</text>
        <dbReference type="Rhea" id="RHEA:23284"/>
        <dbReference type="ChEBI" id="CHEBI:57623"/>
        <dbReference type="ChEBI" id="CHEBI:128769"/>
        <dbReference type="EC" id="5.3.3.2"/>
    </reaction>
</comment>
<comment type="cofactor">
    <cofactor evidence="1">
        <name>FMN</name>
        <dbReference type="ChEBI" id="CHEBI:58210"/>
    </cofactor>
</comment>
<comment type="cofactor">
    <cofactor evidence="1">
        <name>NADPH</name>
        <dbReference type="ChEBI" id="CHEBI:57783"/>
    </cofactor>
</comment>
<comment type="cofactor">
    <cofactor evidence="1">
        <name>Mg(2+)</name>
        <dbReference type="ChEBI" id="CHEBI:18420"/>
    </cofactor>
</comment>
<comment type="subunit">
    <text evidence="1">Homooctamer. Dimer of tetramers.</text>
</comment>
<comment type="subcellular location">
    <subcellularLocation>
        <location evidence="1">Cytoplasm</location>
    </subcellularLocation>
</comment>
<comment type="similarity">
    <text evidence="1">Belongs to the IPP isomerase type 2 family.</text>
</comment>
<sequence>MSETANSRTTERKQDHIEICLHGDVVFNGKTTGFERFAFEHAALPEISFSDIDLSTSFLGKSIGAPLMISSMTGGYSEAATLNQRLAEAAERFGIPLGVGSMRQALENRSYRESFAVVRKYAPTVQIFANIGAPEVAKGLTESEINTMLELLRADGLIVHLNAAQELFQPEGNTDFRHVLEQLALLSAKIPVPVLVKEVGCGISASAARQLIAAGVKAIDVAGAGGISWQKVEEIRYTRQFGQERRFSLQALDELLNWGIPTAQCLIDIGALKKESPGLNGIEIVASGGVGSGMDVAKSLALGAQLAASARALLKALHDGVLEETITSWLNDLRAVMFLTGTATIAELRHKTLITKP</sequence>
<accession>B4SCG2</accession>
<proteinExistence type="inferred from homology"/>
<organism>
    <name type="scientific">Pelodictyon phaeoclathratiforme (strain DSM 5477 / BU-1)</name>
    <dbReference type="NCBI Taxonomy" id="324925"/>
    <lineage>
        <taxon>Bacteria</taxon>
        <taxon>Pseudomonadati</taxon>
        <taxon>Chlorobiota</taxon>
        <taxon>Chlorobiia</taxon>
        <taxon>Chlorobiales</taxon>
        <taxon>Chlorobiaceae</taxon>
        <taxon>Chlorobium/Pelodictyon group</taxon>
        <taxon>Pelodictyon</taxon>
    </lineage>
</organism>
<name>IDI2_PELPB</name>
<dbReference type="EC" id="5.3.3.2" evidence="1"/>
<dbReference type="EMBL" id="CP001110">
    <property type="protein sequence ID" value="ACF42742.1"/>
    <property type="molecule type" value="Genomic_DNA"/>
</dbReference>
<dbReference type="RefSeq" id="WP_012507237.1">
    <property type="nucleotide sequence ID" value="NC_011060.1"/>
</dbReference>
<dbReference type="SMR" id="B4SCG2"/>
<dbReference type="STRING" id="324925.Ppha_0414"/>
<dbReference type="KEGG" id="pph:Ppha_0414"/>
<dbReference type="eggNOG" id="COG1304">
    <property type="taxonomic scope" value="Bacteria"/>
</dbReference>
<dbReference type="HOGENOM" id="CLU_065515_1_0_10"/>
<dbReference type="OrthoDB" id="9795032at2"/>
<dbReference type="Proteomes" id="UP000002724">
    <property type="component" value="Chromosome"/>
</dbReference>
<dbReference type="GO" id="GO:0005737">
    <property type="term" value="C:cytoplasm"/>
    <property type="evidence" value="ECO:0007669"/>
    <property type="project" value="UniProtKB-SubCell"/>
</dbReference>
<dbReference type="GO" id="GO:0010181">
    <property type="term" value="F:FMN binding"/>
    <property type="evidence" value="ECO:0007669"/>
    <property type="project" value="UniProtKB-UniRule"/>
</dbReference>
<dbReference type="GO" id="GO:0004452">
    <property type="term" value="F:isopentenyl-diphosphate delta-isomerase activity"/>
    <property type="evidence" value="ECO:0007669"/>
    <property type="project" value="UniProtKB-UniRule"/>
</dbReference>
<dbReference type="GO" id="GO:0000287">
    <property type="term" value="F:magnesium ion binding"/>
    <property type="evidence" value="ECO:0007669"/>
    <property type="project" value="UniProtKB-UniRule"/>
</dbReference>
<dbReference type="GO" id="GO:0070402">
    <property type="term" value="F:NADPH binding"/>
    <property type="evidence" value="ECO:0007669"/>
    <property type="project" value="UniProtKB-UniRule"/>
</dbReference>
<dbReference type="GO" id="GO:0016491">
    <property type="term" value="F:oxidoreductase activity"/>
    <property type="evidence" value="ECO:0007669"/>
    <property type="project" value="InterPro"/>
</dbReference>
<dbReference type="GO" id="GO:0008299">
    <property type="term" value="P:isoprenoid biosynthetic process"/>
    <property type="evidence" value="ECO:0007669"/>
    <property type="project" value="UniProtKB-UniRule"/>
</dbReference>
<dbReference type="CDD" id="cd02811">
    <property type="entry name" value="IDI-2_FMN"/>
    <property type="match status" value="1"/>
</dbReference>
<dbReference type="Gene3D" id="3.20.20.70">
    <property type="entry name" value="Aldolase class I"/>
    <property type="match status" value="1"/>
</dbReference>
<dbReference type="HAMAP" id="MF_00354">
    <property type="entry name" value="Idi_2"/>
    <property type="match status" value="1"/>
</dbReference>
<dbReference type="InterPro" id="IPR013785">
    <property type="entry name" value="Aldolase_TIM"/>
</dbReference>
<dbReference type="InterPro" id="IPR000262">
    <property type="entry name" value="FMN-dep_DH"/>
</dbReference>
<dbReference type="InterPro" id="IPR011179">
    <property type="entry name" value="IPdP_isomerase"/>
</dbReference>
<dbReference type="NCBIfam" id="TIGR02151">
    <property type="entry name" value="IPP_isom_2"/>
    <property type="match status" value="1"/>
</dbReference>
<dbReference type="PANTHER" id="PTHR43665">
    <property type="entry name" value="ISOPENTENYL-DIPHOSPHATE DELTA-ISOMERASE"/>
    <property type="match status" value="1"/>
</dbReference>
<dbReference type="PANTHER" id="PTHR43665:SF1">
    <property type="entry name" value="ISOPENTENYL-DIPHOSPHATE DELTA-ISOMERASE"/>
    <property type="match status" value="1"/>
</dbReference>
<dbReference type="Pfam" id="PF01070">
    <property type="entry name" value="FMN_dh"/>
    <property type="match status" value="2"/>
</dbReference>
<dbReference type="PIRSF" id="PIRSF003314">
    <property type="entry name" value="IPP_isomerase"/>
    <property type="match status" value="1"/>
</dbReference>
<dbReference type="SMART" id="SM01240">
    <property type="entry name" value="IMPDH"/>
    <property type="match status" value="1"/>
</dbReference>
<dbReference type="SUPFAM" id="SSF51395">
    <property type="entry name" value="FMN-linked oxidoreductases"/>
    <property type="match status" value="1"/>
</dbReference>
<gene>
    <name evidence="1" type="primary">fni</name>
    <name type="ordered locus">Ppha_0414</name>
</gene>
<feature type="chain" id="PRO_1000133432" description="Isopentenyl-diphosphate delta-isomerase">
    <location>
        <begin position="1"/>
        <end position="357"/>
    </location>
</feature>
<feature type="binding site" evidence="1">
    <location>
        <begin position="12"/>
        <end position="13"/>
    </location>
    <ligand>
        <name>substrate</name>
    </ligand>
</feature>
<feature type="binding site" evidence="1">
    <location>
        <position position="70"/>
    </location>
    <ligand>
        <name>FMN</name>
        <dbReference type="ChEBI" id="CHEBI:58210"/>
    </ligand>
</feature>
<feature type="binding site" evidence="1">
    <location>
        <begin position="71"/>
        <end position="73"/>
    </location>
    <ligand>
        <name>FMN</name>
        <dbReference type="ChEBI" id="CHEBI:58210"/>
    </ligand>
</feature>
<feature type="binding site" evidence="1">
    <location>
        <begin position="101"/>
        <end position="103"/>
    </location>
    <ligand>
        <name>substrate</name>
    </ligand>
</feature>
<feature type="binding site" evidence="1">
    <location>
        <position position="101"/>
    </location>
    <ligand>
        <name>FMN</name>
        <dbReference type="ChEBI" id="CHEBI:58210"/>
    </ligand>
</feature>
<feature type="binding site" evidence="1">
    <location>
        <position position="130"/>
    </location>
    <ligand>
        <name>FMN</name>
        <dbReference type="ChEBI" id="CHEBI:58210"/>
    </ligand>
</feature>
<feature type="binding site" evidence="1">
    <location>
        <position position="165"/>
    </location>
    <ligand>
        <name>substrate</name>
    </ligand>
</feature>
<feature type="binding site" evidence="1">
    <location>
        <position position="166"/>
    </location>
    <ligand>
        <name>Mg(2+)</name>
        <dbReference type="ChEBI" id="CHEBI:18420"/>
    </ligand>
</feature>
<feature type="binding site" evidence="1">
    <location>
        <position position="197"/>
    </location>
    <ligand>
        <name>FMN</name>
        <dbReference type="ChEBI" id="CHEBI:58210"/>
    </ligand>
</feature>
<feature type="binding site" evidence="1">
    <location>
        <begin position="310"/>
        <end position="311"/>
    </location>
    <ligand>
        <name>FMN</name>
        <dbReference type="ChEBI" id="CHEBI:58210"/>
    </ligand>
</feature>
<reference key="1">
    <citation type="submission" date="2008-06" db="EMBL/GenBank/DDBJ databases">
        <title>Complete sequence of Pelodictyon phaeoclathratiforme BU-1.</title>
        <authorList>
            <consortium name="US DOE Joint Genome Institute"/>
            <person name="Lucas S."/>
            <person name="Copeland A."/>
            <person name="Lapidus A."/>
            <person name="Glavina del Rio T."/>
            <person name="Dalin E."/>
            <person name="Tice H."/>
            <person name="Bruce D."/>
            <person name="Goodwin L."/>
            <person name="Pitluck S."/>
            <person name="Schmutz J."/>
            <person name="Larimer F."/>
            <person name="Land M."/>
            <person name="Hauser L."/>
            <person name="Kyrpides N."/>
            <person name="Mikhailova N."/>
            <person name="Liu Z."/>
            <person name="Li T."/>
            <person name="Zhao F."/>
            <person name="Overmann J."/>
            <person name="Bryant D.A."/>
            <person name="Richardson P."/>
        </authorList>
    </citation>
    <scope>NUCLEOTIDE SEQUENCE [LARGE SCALE GENOMIC DNA]</scope>
    <source>
        <strain>DSM 5477 / BU-1</strain>
    </source>
</reference>